<organism>
    <name type="scientific">Pyropia yezoensis</name>
    <name type="common">Susabi-nori</name>
    <name type="synonym">Porphyra yezoensis</name>
    <dbReference type="NCBI Taxonomy" id="2788"/>
    <lineage>
        <taxon>Eukaryota</taxon>
        <taxon>Rhodophyta</taxon>
        <taxon>Bangiophyceae</taxon>
        <taxon>Bangiales</taxon>
        <taxon>Bangiaceae</taxon>
        <taxon>Pyropia</taxon>
    </lineage>
</organism>
<name>ATPB_PYRYE</name>
<dbReference type="EC" id="7.1.2.2" evidence="1"/>
<dbReference type="EMBL" id="AP006715">
    <property type="protein sequence ID" value="BAE92383.1"/>
    <property type="molecule type" value="Genomic_DNA"/>
</dbReference>
<dbReference type="RefSeq" id="YP_536940.1">
    <property type="nucleotide sequence ID" value="NC_007932.1"/>
</dbReference>
<dbReference type="SMR" id="Q1XDM8"/>
<dbReference type="GeneID" id="3978834"/>
<dbReference type="GO" id="GO:0009535">
    <property type="term" value="C:chloroplast thylakoid membrane"/>
    <property type="evidence" value="ECO:0007669"/>
    <property type="project" value="UniProtKB-SubCell"/>
</dbReference>
<dbReference type="GO" id="GO:0005739">
    <property type="term" value="C:mitochondrion"/>
    <property type="evidence" value="ECO:0007669"/>
    <property type="project" value="GOC"/>
</dbReference>
<dbReference type="GO" id="GO:0045259">
    <property type="term" value="C:proton-transporting ATP synthase complex"/>
    <property type="evidence" value="ECO:0007669"/>
    <property type="project" value="UniProtKB-KW"/>
</dbReference>
<dbReference type="GO" id="GO:0005524">
    <property type="term" value="F:ATP binding"/>
    <property type="evidence" value="ECO:0007669"/>
    <property type="project" value="UniProtKB-UniRule"/>
</dbReference>
<dbReference type="GO" id="GO:0016887">
    <property type="term" value="F:ATP hydrolysis activity"/>
    <property type="evidence" value="ECO:0007669"/>
    <property type="project" value="InterPro"/>
</dbReference>
<dbReference type="GO" id="GO:0046933">
    <property type="term" value="F:proton-transporting ATP synthase activity, rotational mechanism"/>
    <property type="evidence" value="ECO:0007669"/>
    <property type="project" value="UniProtKB-UniRule"/>
</dbReference>
<dbReference type="GO" id="GO:0042776">
    <property type="term" value="P:proton motive force-driven mitochondrial ATP synthesis"/>
    <property type="evidence" value="ECO:0007669"/>
    <property type="project" value="TreeGrafter"/>
</dbReference>
<dbReference type="CDD" id="cd18110">
    <property type="entry name" value="ATP-synt_F1_beta_C"/>
    <property type="match status" value="1"/>
</dbReference>
<dbReference type="CDD" id="cd18115">
    <property type="entry name" value="ATP-synt_F1_beta_N"/>
    <property type="match status" value="1"/>
</dbReference>
<dbReference type="CDD" id="cd01133">
    <property type="entry name" value="F1-ATPase_beta_CD"/>
    <property type="match status" value="1"/>
</dbReference>
<dbReference type="FunFam" id="1.10.1140.10:FF:000001">
    <property type="entry name" value="ATP synthase subunit beta"/>
    <property type="match status" value="1"/>
</dbReference>
<dbReference type="FunFam" id="2.40.10.170:FF:000005">
    <property type="entry name" value="ATP synthase subunit beta"/>
    <property type="match status" value="1"/>
</dbReference>
<dbReference type="FunFam" id="3.40.50.12240:FF:000006">
    <property type="entry name" value="ATP synthase subunit beta"/>
    <property type="match status" value="1"/>
</dbReference>
<dbReference type="FunFam" id="3.40.50.300:FF:000004">
    <property type="entry name" value="ATP synthase subunit beta"/>
    <property type="match status" value="1"/>
</dbReference>
<dbReference type="Gene3D" id="2.40.10.170">
    <property type="match status" value="1"/>
</dbReference>
<dbReference type="Gene3D" id="1.10.1140.10">
    <property type="entry name" value="Bovine Mitochondrial F1-atpase, Atp Synthase Beta Chain, Chain D, domain 3"/>
    <property type="match status" value="1"/>
</dbReference>
<dbReference type="Gene3D" id="3.40.50.300">
    <property type="entry name" value="P-loop containing nucleotide triphosphate hydrolases"/>
    <property type="match status" value="1"/>
</dbReference>
<dbReference type="HAMAP" id="MF_01347">
    <property type="entry name" value="ATP_synth_beta_bact"/>
    <property type="match status" value="1"/>
</dbReference>
<dbReference type="InterPro" id="IPR003593">
    <property type="entry name" value="AAA+_ATPase"/>
</dbReference>
<dbReference type="InterPro" id="IPR055190">
    <property type="entry name" value="ATP-synt_VA_C"/>
</dbReference>
<dbReference type="InterPro" id="IPR005722">
    <property type="entry name" value="ATP_synth_F1_bsu"/>
</dbReference>
<dbReference type="InterPro" id="IPR020003">
    <property type="entry name" value="ATPase_a/bsu_AS"/>
</dbReference>
<dbReference type="InterPro" id="IPR050053">
    <property type="entry name" value="ATPase_alpha/beta_chains"/>
</dbReference>
<dbReference type="InterPro" id="IPR004100">
    <property type="entry name" value="ATPase_F1/V1/A1_a/bsu_N"/>
</dbReference>
<dbReference type="InterPro" id="IPR036121">
    <property type="entry name" value="ATPase_F1/V1/A1_a/bsu_N_sf"/>
</dbReference>
<dbReference type="InterPro" id="IPR000194">
    <property type="entry name" value="ATPase_F1/V1/A1_a/bsu_nucl-bd"/>
</dbReference>
<dbReference type="InterPro" id="IPR024034">
    <property type="entry name" value="ATPase_F1/V1_b/a_C"/>
</dbReference>
<dbReference type="InterPro" id="IPR027417">
    <property type="entry name" value="P-loop_NTPase"/>
</dbReference>
<dbReference type="NCBIfam" id="TIGR01039">
    <property type="entry name" value="atpD"/>
    <property type="match status" value="1"/>
</dbReference>
<dbReference type="PANTHER" id="PTHR15184">
    <property type="entry name" value="ATP SYNTHASE"/>
    <property type="match status" value="1"/>
</dbReference>
<dbReference type="PANTHER" id="PTHR15184:SF71">
    <property type="entry name" value="ATP SYNTHASE SUBUNIT BETA, MITOCHONDRIAL"/>
    <property type="match status" value="1"/>
</dbReference>
<dbReference type="Pfam" id="PF00006">
    <property type="entry name" value="ATP-synt_ab"/>
    <property type="match status" value="1"/>
</dbReference>
<dbReference type="Pfam" id="PF02874">
    <property type="entry name" value="ATP-synt_ab_N"/>
    <property type="match status" value="1"/>
</dbReference>
<dbReference type="Pfam" id="PF22919">
    <property type="entry name" value="ATP-synt_VA_C"/>
    <property type="match status" value="1"/>
</dbReference>
<dbReference type="SMART" id="SM00382">
    <property type="entry name" value="AAA"/>
    <property type="match status" value="1"/>
</dbReference>
<dbReference type="SUPFAM" id="SSF47917">
    <property type="entry name" value="C-terminal domain of alpha and beta subunits of F1 ATP synthase"/>
    <property type="match status" value="1"/>
</dbReference>
<dbReference type="SUPFAM" id="SSF50615">
    <property type="entry name" value="N-terminal domain of alpha and beta subunits of F1 ATP synthase"/>
    <property type="match status" value="1"/>
</dbReference>
<dbReference type="SUPFAM" id="SSF52540">
    <property type="entry name" value="P-loop containing nucleoside triphosphate hydrolases"/>
    <property type="match status" value="1"/>
</dbReference>
<dbReference type="PROSITE" id="PS00152">
    <property type="entry name" value="ATPASE_ALPHA_BETA"/>
    <property type="match status" value="1"/>
</dbReference>
<gene>
    <name evidence="1" type="primary">atpB</name>
</gene>
<protein>
    <recommendedName>
        <fullName evidence="1">ATP synthase subunit beta, chloroplastic</fullName>
        <ecNumber evidence="1">7.1.2.2</ecNumber>
    </recommendedName>
    <alternativeName>
        <fullName evidence="1">ATP synthase F1 sector subunit beta</fullName>
    </alternativeName>
    <alternativeName>
        <fullName evidence="1">F-ATPase subunit beta</fullName>
    </alternativeName>
</protein>
<feature type="chain" id="PRO_0000254515" description="ATP synthase subunit beta, chloroplastic">
    <location>
        <begin position="1"/>
        <end position="475"/>
    </location>
</feature>
<feature type="binding site" evidence="1">
    <location>
        <begin position="155"/>
        <end position="162"/>
    </location>
    <ligand>
        <name>ATP</name>
        <dbReference type="ChEBI" id="CHEBI:30616"/>
    </ligand>
</feature>
<comment type="function">
    <text evidence="1">Produces ATP from ADP in the presence of a proton gradient across the membrane. The catalytic sites are hosted primarily by the beta subunits.</text>
</comment>
<comment type="catalytic activity">
    <reaction evidence="1">
        <text>ATP + H2O + 4 H(+)(in) = ADP + phosphate + 5 H(+)(out)</text>
        <dbReference type="Rhea" id="RHEA:57720"/>
        <dbReference type="ChEBI" id="CHEBI:15377"/>
        <dbReference type="ChEBI" id="CHEBI:15378"/>
        <dbReference type="ChEBI" id="CHEBI:30616"/>
        <dbReference type="ChEBI" id="CHEBI:43474"/>
        <dbReference type="ChEBI" id="CHEBI:456216"/>
        <dbReference type="EC" id="7.1.2.2"/>
    </reaction>
</comment>
<comment type="subunit">
    <text evidence="1">F-type ATPases have 2 components, CF(1) - the catalytic core - and CF(0) - the membrane proton channel. CF(1) has five subunits: alpha(3), beta(3), gamma(1), delta(1), epsilon(1). CF(0) has four main subunits: a(1), b(1), b'(1) and c(9-12).</text>
</comment>
<comment type="subcellular location">
    <subcellularLocation>
        <location evidence="1">Plastid</location>
        <location evidence="1">Chloroplast thylakoid membrane</location>
        <topology evidence="1">Peripheral membrane protein</topology>
    </subcellularLocation>
</comment>
<comment type="similarity">
    <text evidence="1">Belongs to the ATPase alpha/beta chains family.</text>
</comment>
<evidence type="ECO:0000255" key="1">
    <source>
        <dbReference type="HAMAP-Rule" id="MF_01347"/>
    </source>
</evidence>
<accession>Q1XDM8</accession>
<reference key="1">
    <citation type="submission" date="2003-11" db="EMBL/GenBank/DDBJ databases">
        <title>Whole genome sequence of Porphyra yezoensis chloroplast.</title>
        <authorList>
            <person name="Kunimoto M."/>
            <person name="Morishima K."/>
            <person name="Yoshikawa M."/>
            <person name="Fukuda S."/>
            <person name="Kobayashi T."/>
            <person name="Kobayashi M."/>
            <person name="Okazaki T."/>
            <person name="Ohara I."/>
            <person name="Nakayama I."/>
        </authorList>
    </citation>
    <scope>NUCLEOTIDE SEQUENCE [LARGE SCALE GENOMIC DNA]</scope>
    <source>
        <strain>U-51</strain>
    </source>
</reference>
<geneLocation type="chloroplast"/>
<keyword id="KW-0066">ATP synthesis</keyword>
<keyword id="KW-0067">ATP-binding</keyword>
<keyword id="KW-0139">CF(1)</keyword>
<keyword id="KW-0150">Chloroplast</keyword>
<keyword id="KW-0375">Hydrogen ion transport</keyword>
<keyword id="KW-0406">Ion transport</keyword>
<keyword id="KW-0472">Membrane</keyword>
<keyword id="KW-0547">Nucleotide-binding</keyword>
<keyword id="KW-0934">Plastid</keyword>
<keyword id="KW-0793">Thylakoid</keyword>
<keyword id="KW-1278">Translocase</keyword>
<keyword id="KW-0813">Transport</keyword>
<proteinExistence type="inferred from homology"/>
<sequence>MVSTTKSTGSVTQIIGPVLDIAFPNGQLPKVFNALKVQSSEGTITCEVQQLLGDNKVRAVSMSSTEGLQRGVEVIDTGSPISVPVGTDTLGRIFNVLGEPVDNLGPVDSESTLPIHRPAPAFTKLETKPNIFETGIKVVDLLAPYRRGGKIGLFGGAGVGKTVLIMELINNIAKAHGGVSVFGGVGERTREGNDLYMEMKESKVIDADNLKESKVALVYGQMNEPPGARMRVGLTALTMAEYFRDINKQDVLLFIDNIFRFVQAGSEVSALLGRMPSAVGYQPTLATEMGALQERITSTTEGSITSIQAVYVPADDLTDPVPATTFAHLDATTVLSRNLAAKGIYPAVDPLDSTSTMLQPGIVGTEHYSTAQEVKSTLQRYKELQDIIAILGLDELSEEDRQTVSRARKIERFLSQPFFVAEVFTGSPGKYVSLEDAIKGFQMILKGNLDDLPEQAFYLVGDIDEAIQKADSMKD</sequence>